<reference key="1">
    <citation type="journal article" date="1997" name="Nature">
        <title>The complete genome sequence of the Gram-positive bacterium Bacillus subtilis.</title>
        <authorList>
            <person name="Kunst F."/>
            <person name="Ogasawara N."/>
            <person name="Moszer I."/>
            <person name="Albertini A.M."/>
            <person name="Alloni G."/>
            <person name="Azevedo V."/>
            <person name="Bertero M.G."/>
            <person name="Bessieres P."/>
            <person name="Bolotin A."/>
            <person name="Borchert S."/>
            <person name="Borriss R."/>
            <person name="Boursier L."/>
            <person name="Brans A."/>
            <person name="Braun M."/>
            <person name="Brignell S.C."/>
            <person name="Bron S."/>
            <person name="Brouillet S."/>
            <person name="Bruschi C.V."/>
            <person name="Caldwell B."/>
            <person name="Capuano V."/>
            <person name="Carter N.M."/>
            <person name="Choi S.-K."/>
            <person name="Codani J.-J."/>
            <person name="Connerton I.F."/>
            <person name="Cummings N.J."/>
            <person name="Daniel R.A."/>
            <person name="Denizot F."/>
            <person name="Devine K.M."/>
            <person name="Duesterhoeft A."/>
            <person name="Ehrlich S.D."/>
            <person name="Emmerson P.T."/>
            <person name="Entian K.-D."/>
            <person name="Errington J."/>
            <person name="Fabret C."/>
            <person name="Ferrari E."/>
            <person name="Foulger D."/>
            <person name="Fritz C."/>
            <person name="Fujita M."/>
            <person name="Fujita Y."/>
            <person name="Fuma S."/>
            <person name="Galizzi A."/>
            <person name="Galleron N."/>
            <person name="Ghim S.-Y."/>
            <person name="Glaser P."/>
            <person name="Goffeau A."/>
            <person name="Golightly E.J."/>
            <person name="Grandi G."/>
            <person name="Guiseppi G."/>
            <person name="Guy B.J."/>
            <person name="Haga K."/>
            <person name="Haiech J."/>
            <person name="Harwood C.R."/>
            <person name="Henaut A."/>
            <person name="Hilbert H."/>
            <person name="Holsappel S."/>
            <person name="Hosono S."/>
            <person name="Hullo M.-F."/>
            <person name="Itaya M."/>
            <person name="Jones L.-M."/>
            <person name="Joris B."/>
            <person name="Karamata D."/>
            <person name="Kasahara Y."/>
            <person name="Klaerr-Blanchard M."/>
            <person name="Klein C."/>
            <person name="Kobayashi Y."/>
            <person name="Koetter P."/>
            <person name="Koningstein G."/>
            <person name="Krogh S."/>
            <person name="Kumano M."/>
            <person name="Kurita K."/>
            <person name="Lapidus A."/>
            <person name="Lardinois S."/>
            <person name="Lauber J."/>
            <person name="Lazarevic V."/>
            <person name="Lee S.-M."/>
            <person name="Levine A."/>
            <person name="Liu H."/>
            <person name="Masuda S."/>
            <person name="Mauel C."/>
            <person name="Medigue C."/>
            <person name="Medina N."/>
            <person name="Mellado R.P."/>
            <person name="Mizuno M."/>
            <person name="Moestl D."/>
            <person name="Nakai S."/>
            <person name="Noback M."/>
            <person name="Noone D."/>
            <person name="O'Reilly M."/>
            <person name="Ogawa K."/>
            <person name="Ogiwara A."/>
            <person name="Oudega B."/>
            <person name="Park S.-H."/>
            <person name="Parro V."/>
            <person name="Pohl T.M."/>
            <person name="Portetelle D."/>
            <person name="Porwollik S."/>
            <person name="Prescott A.M."/>
            <person name="Presecan E."/>
            <person name="Pujic P."/>
            <person name="Purnelle B."/>
            <person name="Rapoport G."/>
            <person name="Rey M."/>
            <person name="Reynolds S."/>
            <person name="Rieger M."/>
            <person name="Rivolta C."/>
            <person name="Rocha E."/>
            <person name="Roche B."/>
            <person name="Rose M."/>
            <person name="Sadaie Y."/>
            <person name="Sato T."/>
            <person name="Scanlan E."/>
            <person name="Schleich S."/>
            <person name="Schroeter R."/>
            <person name="Scoffone F."/>
            <person name="Sekiguchi J."/>
            <person name="Sekowska A."/>
            <person name="Seror S.J."/>
            <person name="Serror P."/>
            <person name="Shin B.-S."/>
            <person name="Soldo B."/>
            <person name="Sorokin A."/>
            <person name="Tacconi E."/>
            <person name="Takagi T."/>
            <person name="Takahashi H."/>
            <person name="Takemaru K."/>
            <person name="Takeuchi M."/>
            <person name="Tamakoshi A."/>
            <person name="Tanaka T."/>
            <person name="Terpstra P."/>
            <person name="Tognoni A."/>
            <person name="Tosato V."/>
            <person name="Uchiyama S."/>
            <person name="Vandenbol M."/>
            <person name="Vannier F."/>
            <person name="Vassarotti A."/>
            <person name="Viari A."/>
            <person name="Wambutt R."/>
            <person name="Wedler E."/>
            <person name="Wedler H."/>
            <person name="Weitzenegger T."/>
            <person name="Winters P."/>
            <person name="Wipat A."/>
            <person name="Yamamoto H."/>
            <person name="Yamane K."/>
            <person name="Yasumoto K."/>
            <person name="Yata K."/>
            <person name="Yoshida K."/>
            <person name="Yoshikawa H.-F."/>
            <person name="Zumstein E."/>
            <person name="Yoshikawa H."/>
            <person name="Danchin A."/>
        </authorList>
    </citation>
    <scope>NUCLEOTIDE SEQUENCE [LARGE SCALE GENOMIC DNA]</scope>
    <source>
        <strain>168</strain>
    </source>
</reference>
<organism>
    <name type="scientific">Bacillus subtilis (strain 168)</name>
    <dbReference type="NCBI Taxonomy" id="224308"/>
    <lineage>
        <taxon>Bacteria</taxon>
        <taxon>Bacillati</taxon>
        <taxon>Bacillota</taxon>
        <taxon>Bacilli</taxon>
        <taxon>Bacillales</taxon>
        <taxon>Bacillaceae</taxon>
        <taxon>Bacillus</taxon>
    </lineage>
</organism>
<protein>
    <recommendedName>
        <fullName>Probable DNA polymerase YorL</fullName>
        <ecNumber>2.7.7.7</ecNumber>
    </recommendedName>
</protein>
<evidence type="ECO:0000250" key="1"/>
<evidence type="ECO:0000305" key="2"/>
<dbReference type="EC" id="2.7.7.7"/>
<dbReference type="EMBL" id="AL009126">
    <property type="protein sequence ID" value="CAB13926.1"/>
    <property type="molecule type" value="Genomic_DNA"/>
</dbReference>
<dbReference type="RefSeq" id="WP_009967475.1">
    <property type="nucleotide sequence ID" value="NZ_OZ025638.1"/>
</dbReference>
<dbReference type="SMR" id="O31902"/>
<dbReference type="FunCoup" id="O31902">
    <property type="interactions" value="135"/>
</dbReference>
<dbReference type="STRING" id="224308.BSU20340"/>
<dbReference type="PaxDb" id="224308-BSU20340"/>
<dbReference type="EnsemblBacteria" id="CAB13926">
    <property type="protein sequence ID" value="CAB13926"/>
    <property type="gene ID" value="BSU_20340"/>
</dbReference>
<dbReference type="GeneID" id="939437"/>
<dbReference type="KEGG" id="bsu:BSU20340"/>
<dbReference type="PATRIC" id="fig|224308.179.peg.2224"/>
<dbReference type="eggNOG" id="COG0587">
    <property type="taxonomic scope" value="Bacteria"/>
</dbReference>
<dbReference type="InParanoid" id="O31902"/>
<dbReference type="OrthoDB" id="244056at2"/>
<dbReference type="PhylomeDB" id="O31902"/>
<dbReference type="BioCyc" id="BSUB:BSU20340-MONOMER"/>
<dbReference type="Proteomes" id="UP000001570">
    <property type="component" value="Chromosome"/>
</dbReference>
<dbReference type="GO" id="GO:0008408">
    <property type="term" value="F:3'-5' exonuclease activity"/>
    <property type="evidence" value="ECO:0007669"/>
    <property type="project" value="InterPro"/>
</dbReference>
<dbReference type="GO" id="GO:0003887">
    <property type="term" value="F:DNA-directed DNA polymerase activity"/>
    <property type="evidence" value="ECO:0000318"/>
    <property type="project" value="GO_Central"/>
</dbReference>
<dbReference type="GO" id="GO:0006260">
    <property type="term" value="P:DNA replication"/>
    <property type="evidence" value="ECO:0007669"/>
    <property type="project" value="UniProtKB-KW"/>
</dbReference>
<dbReference type="Gene3D" id="1.10.150.870">
    <property type="match status" value="1"/>
</dbReference>
<dbReference type="Gene3D" id="1.10.10.1600">
    <property type="entry name" value="Bacterial DNA polymerase III alpha subunit, thumb domain"/>
    <property type="match status" value="1"/>
</dbReference>
<dbReference type="Gene3D" id="3.20.20.140">
    <property type="entry name" value="Metal-dependent hydrolases"/>
    <property type="match status" value="1"/>
</dbReference>
<dbReference type="InterPro" id="IPR011708">
    <property type="entry name" value="DNA_pol3_alpha_NTPase_dom"/>
</dbReference>
<dbReference type="InterPro" id="IPR041931">
    <property type="entry name" value="DNA_pol3_alpha_thumb_dom"/>
</dbReference>
<dbReference type="InterPro" id="IPR040982">
    <property type="entry name" value="DNA_pol3_finger"/>
</dbReference>
<dbReference type="InterPro" id="IPR004805">
    <property type="entry name" value="DnaE2/DnaE/PolC"/>
</dbReference>
<dbReference type="InterPro" id="IPR029460">
    <property type="entry name" value="DNAPol_HHH"/>
</dbReference>
<dbReference type="InterPro" id="IPR004013">
    <property type="entry name" value="PHP_dom"/>
</dbReference>
<dbReference type="InterPro" id="IPR003141">
    <property type="entry name" value="Pol/His_phosphatase_N"/>
</dbReference>
<dbReference type="InterPro" id="IPR016195">
    <property type="entry name" value="Pol/histidinol_Pase-like"/>
</dbReference>
<dbReference type="NCBIfam" id="TIGR00594">
    <property type="entry name" value="polc"/>
    <property type="match status" value="1"/>
</dbReference>
<dbReference type="PANTHER" id="PTHR32294">
    <property type="entry name" value="DNA POLYMERASE III SUBUNIT ALPHA"/>
    <property type="match status" value="1"/>
</dbReference>
<dbReference type="PANTHER" id="PTHR32294:SF0">
    <property type="entry name" value="DNA POLYMERASE III SUBUNIT ALPHA"/>
    <property type="match status" value="1"/>
</dbReference>
<dbReference type="Pfam" id="PF07733">
    <property type="entry name" value="DNA_pol3_alpha"/>
    <property type="match status" value="1"/>
</dbReference>
<dbReference type="Pfam" id="PF17657">
    <property type="entry name" value="DNA_pol3_finger"/>
    <property type="match status" value="1"/>
</dbReference>
<dbReference type="Pfam" id="PF14579">
    <property type="entry name" value="HHH_6"/>
    <property type="match status" value="1"/>
</dbReference>
<dbReference type="Pfam" id="PF02811">
    <property type="entry name" value="PHP"/>
    <property type="match status" value="1"/>
</dbReference>
<dbReference type="SMART" id="SM00481">
    <property type="entry name" value="POLIIIAc"/>
    <property type="match status" value="1"/>
</dbReference>
<dbReference type="SUPFAM" id="SSF89550">
    <property type="entry name" value="PHP domain-like"/>
    <property type="match status" value="1"/>
</dbReference>
<comment type="function">
    <text evidence="1">Probable DNA polymerase.</text>
</comment>
<comment type="catalytic activity">
    <reaction>
        <text>DNA(n) + a 2'-deoxyribonucleoside 5'-triphosphate = DNA(n+1) + diphosphate</text>
        <dbReference type="Rhea" id="RHEA:22508"/>
        <dbReference type="Rhea" id="RHEA-COMP:17339"/>
        <dbReference type="Rhea" id="RHEA-COMP:17340"/>
        <dbReference type="ChEBI" id="CHEBI:33019"/>
        <dbReference type="ChEBI" id="CHEBI:61560"/>
        <dbReference type="ChEBI" id="CHEBI:173112"/>
        <dbReference type="EC" id="2.7.7.7"/>
    </reaction>
</comment>
<comment type="similarity">
    <text evidence="2">Belongs to the DNA polymerase type-C family.</text>
</comment>
<name>YORL_BACSU</name>
<keyword id="KW-0235">DNA replication</keyword>
<keyword id="KW-0239">DNA-directed DNA polymerase</keyword>
<keyword id="KW-0548">Nucleotidyltransferase</keyword>
<keyword id="KW-1185">Reference proteome</keyword>
<keyword id="KW-0808">Transferase</keyword>
<gene>
    <name type="primary">yorL</name>
    <name type="ordered locus">BSU20340</name>
</gene>
<sequence>MIGCHCHTDRSNIRLLDSTNSVKELLKTAVKMEYKGLAITDHEVLSAHLDAIRTVREMKKKGDMPEDFKLILGNEAYLVDSLEEVRDNYKSGVTKFPHFLMLAMDPKGHEQLRILSSQAWENSFYTGTMERVPTVKKDVEELLSKDPGHIIATTACLGSEVNIHLLKIKAFEETGDSQSIKQHKLKIHEFITWCIEVFGKDKFFIELQPALSEEQIYCNKKLIDIANGYDLQMIVTTDAHYLRPEDRAIHQAFLNAKDGEREVDSFYEACFVQNVDEIHERMDYIDKEVIDQAIKNTMLIGEMIEDYTIEHEPIIPKMELPNFKLRHLFKPAYDQYEYIKKMSESADEQDRYLLKLIEDGFEEKLKTSELTREAFHKILNRINVELGELWEISQKLNQSMSSYYITVREIINIIWDDECGGDSLVGAARGSAAGYLVNYLLDNTQINPMQYDLPHWRHIHKSRPDLPDIDIDTEGSKRQKILKALRERFGDKRVLQIATFGTEGSKSALQTACRGLGIDNDISQYLSGMIPFERGSNWPLKHCFYGDKETGRKPIKEFIREVEQYPNLKETALKIEGLTNKRSSHAAGVIIFNDEYTKSNAMMKTPKGAYITQFNMGDSEAMGSVKFDLLTIEALDKIRVTLDQLIENNEIEWQGSLKETYNKYIHPDVIEYEDDKLWEMAGNGEIMDLFQFSTEVGHQSVVKVKPKNLLEAAVTNSLMRLMSDGEEQPVDTYVKYKNNLNKWYEEMTRYGLSEKEIRVMERHLKDIYGVADTQEVVMQMVMDKDIANFDIKESNYLRKSIAKKKEDVLKEVEELFFKKGKEIGTSDNLLNYVWNVQFKRQFGYSFSLLHTLAYSIIALQELNLNYRYNPLYWNTACLTVNSGGIDTEDTKDNKKTAATNYGKVASAIGNIRQRGIKIDLPDINKADFGFRTDINNNSILFGLKGMNGIGDDVIHHIVLNRPYSDFNDFIERMFKSGIIKKGQVIQLIKGGCFDSFGNRQEIMKAFISLISEPKSKLTLSNLKMLIENNIVPSEFAQEVRFFRFKDYISKKVYKTLKSPKDKLFLLDDVSASFYNQHFSEDSVVDMLNGQLVISEKAFKKEYDNKMSNIKSWITTEEPLKKLNDCLLIKEWEKYADGSLGKWEMDSLSYYYNDHELSGVNFAKYDIADFYKLPAEPVKGKPYQWRGKTLYEYETTRIIGTVLDRDKNKHAITLLTPTGVVTVKQWSGSFSHYNKQISRSIGGGKKEVIEKSWYTRGTLLMFTGFRRGNNFIPKVYKDSIYNHTVCRIDFVDNEGSMSLTTKRAEI</sequence>
<accession>O31902</accession>
<feature type="chain" id="PRO_0000360650" description="Probable DNA polymerase YorL">
    <location>
        <begin position="1"/>
        <end position="1305"/>
    </location>
</feature>
<proteinExistence type="inferred from homology"/>